<gene>
    <name evidence="1" type="primary">sbmC</name>
    <name type="synonym">gyrI</name>
    <name type="ordered locus">STY2266</name>
    <name type="ordered locus">t0813</name>
</gene>
<keyword id="KW-0963">Cytoplasm</keyword>
<keyword id="KW-0346">Stress response</keyword>
<name>SBMC_SALTI</name>
<organism>
    <name type="scientific">Salmonella typhi</name>
    <dbReference type="NCBI Taxonomy" id="90370"/>
    <lineage>
        <taxon>Bacteria</taxon>
        <taxon>Pseudomonadati</taxon>
        <taxon>Pseudomonadota</taxon>
        <taxon>Gammaproteobacteria</taxon>
        <taxon>Enterobacterales</taxon>
        <taxon>Enterobacteriaceae</taxon>
        <taxon>Salmonella</taxon>
    </lineage>
</organism>
<comment type="function">
    <text evidence="1">Inhibits the supercoiling activity of DNA gyrase. Acts by inhibiting DNA gyrase at an early step, prior to (or at the step of) binding of DNA by the gyrase. It protects cells against toxins that target DNA gyrase, by inhibiting activity of these toxins and reducing the formation of lethal double-strand breaks in the cell.</text>
</comment>
<comment type="subunit">
    <text evidence="1">Interacts with DNA gyrase.</text>
</comment>
<comment type="subcellular location">
    <subcellularLocation>
        <location evidence="1">Cytoplasm</location>
    </subcellularLocation>
</comment>
<comment type="similarity">
    <text evidence="1">Belongs to the DNA gyrase inhibitor family.</text>
</comment>
<accession>P0A213</accession>
<accession>P41781</accession>
<evidence type="ECO:0000255" key="1">
    <source>
        <dbReference type="HAMAP-Rule" id="MF_01896"/>
    </source>
</evidence>
<protein>
    <recommendedName>
        <fullName evidence="1">DNA gyrase inhibitor</fullName>
    </recommendedName>
</protein>
<feature type="chain" id="PRO_0000083883" description="DNA gyrase inhibitor">
    <location>
        <begin position="1"/>
        <end position="155"/>
    </location>
</feature>
<dbReference type="EMBL" id="AL513382">
    <property type="protein sequence ID" value="CAD02422.1"/>
    <property type="molecule type" value="Genomic_DNA"/>
</dbReference>
<dbReference type="EMBL" id="AE014613">
    <property type="protein sequence ID" value="AAO68502.1"/>
    <property type="molecule type" value="Genomic_DNA"/>
</dbReference>
<dbReference type="RefSeq" id="NP_456610.1">
    <property type="nucleotide sequence ID" value="NC_003198.1"/>
</dbReference>
<dbReference type="RefSeq" id="WP_000384326.1">
    <property type="nucleotide sequence ID" value="NZ_WSUR01000002.1"/>
</dbReference>
<dbReference type="SMR" id="P0A213"/>
<dbReference type="STRING" id="220341.gene:17586177"/>
<dbReference type="KEGG" id="stt:t0813"/>
<dbReference type="KEGG" id="sty:STY2266"/>
<dbReference type="PATRIC" id="fig|220341.7.peg.2285"/>
<dbReference type="eggNOG" id="COG3449">
    <property type="taxonomic scope" value="Bacteria"/>
</dbReference>
<dbReference type="HOGENOM" id="CLU_113664_3_2_6"/>
<dbReference type="OMA" id="TPWYQFF"/>
<dbReference type="OrthoDB" id="282744at2"/>
<dbReference type="Proteomes" id="UP000000541">
    <property type="component" value="Chromosome"/>
</dbReference>
<dbReference type="Proteomes" id="UP000002670">
    <property type="component" value="Chromosome"/>
</dbReference>
<dbReference type="GO" id="GO:0005737">
    <property type="term" value="C:cytoplasm"/>
    <property type="evidence" value="ECO:0007669"/>
    <property type="project" value="UniProtKB-SubCell"/>
</dbReference>
<dbReference type="GO" id="GO:0008657">
    <property type="term" value="F:DNA topoisomerase type II (double strand cut, ATP-hydrolyzing) inhibitor activity"/>
    <property type="evidence" value="ECO:0007669"/>
    <property type="project" value="UniProtKB-UniRule"/>
</dbReference>
<dbReference type="Gene3D" id="3.20.80.10">
    <property type="entry name" value="Regulatory factor, effector binding domain"/>
    <property type="match status" value="1"/>
</dbReference>
<dbReference type="HAMAP" id="MF_01896">
    <property type="entry name" value="DNA_gyrase_inhibitor"/>
    <property type="match status" value="1"/>
</dbReference>
<dbReference type="InterPro" id="IPR010499">
    <property type="entry name" value="AraC_E-bd"/>
</dbReference>
<dbReference type="InterPro" id="IPR050908">
    <property type="entry name" value="DNA_gyrase_inhibitor"/>
</dbReference>
<dbReference type="InterPro" id="IPR024911">
    <property type="entry name" value="DNA_gyrase_inhibitor_GyrI"/>
</dbReference>
<dbReference type="InterPro" id="IPR029442">
    <property type="entry name" value="GyrI-like"/>
</dbReference>
<dbReference type="InterPro" id="IPR011256">
    <property type="entry name" value="Reg_factor_effector_dom_sf"/>
</dbReference>
<dbReference type="NCBIfam" id="NF007451">
    <property type="entry name" value="PRK10016.1"/>
    <property type="match status" value="1"/>
</dbReference>
<dbReference type="PANTHER" id="PTHR40055:SF2">
    <property type="entry name" value="DNA GYRASE INHIBITOR"/>
    <property type="match status" value="1"/>
</dbReference>
<dbReference type="PANTHER" id="PTHR40055">
    <property type="entry name" value="TRANSCRIPTIONAL REGULATOR YGIV-RELATED"/>
    <property type="match status" value="1"/>
</dbReference>
<dbReference type="Pfam" id="PF06445">
    <property type="entry name" value="GyrI-like"/>
    <property type="match status" value="1"/>
</dbReference>
<dbReference type="SMART" id="SM00871">
    <property type="entry name" value="AraC_E_bind"/>
    <property type="match status" value="1"/>
</dbReference>
<dbReference type="SUPFAM" id="SSF55136">
    <property type="entry name" value="Probable bacterial effector-binding domain"/>
    <property type="match status" value="1"/>
</dbReference>
<sequence length="155" mass="18062">MDYEIRQEQKRKIAGFHMVGPWEHTVKQGFEQLMTWVDRQRIVPVEWIAVYYDNPDVVPAEKLRCDTVVSVAENFILPDNSEGVIVTAIEGGEYATAVARVEDRDFAKPWERFFDVLEQDSAYQIASAPCFETYLNNGMEDGYWDIEMYIPVQRK</sequence>
<reference key="1">
    <citation type="journal article" date="2001" name="Nature">
        <title>Complete genome sequence of a multiple drug resistant Salmonella enterica serovar Typhi CT18.</title>
        <authorList>
            <person name="Parkhill J."/>
            <person name="Dougan G."/>
            <person name="James K.D."/>
            <person name="Thomson N.R."/>
            <person name="Pickard D."/>
            <person name="Wain J."/>
            <person name="Churcher C.M."/>
            <person name="Mungall K.L."/>
            <person name="Bentley S.D."/>
            <person name="Holden M.T.G."/>
            <person name="Sebaihia M."/>
            <person name="Baker S."/>
            <person name="Basham D."/>
            <person name="Brooks K."/>
            <person name="Chillingworth T."/>
            <person name="Connerton P."/>
            <person name="Cronin A."/>
            <person name="Davis P."/>
            <person name="Davies R.M."/>
            <person name="Dowd L."/>
            <person name="White N."/>
            <person name="Farrar J."/>
            <person name="Feltwell T."/>
            <person name="Hamlin N."/>
            <person name="Haque A."/>
            <person name="Hien T.T."/>
            <person name="Holroyd S."/>
            <person name="Jagels K."/>
            <person name="Krogh A."/>
            <person name="Larsen T.S."/>
            <person name="Leather S."/>
            <person name="Moule S."/>
            <person name="O'Gaora P."/>
            <person name="Parry C."/>
            <person name="Quail M.A."/>
            <person name="Rutherford K.M."/>
            <person name="Simmonds M."/>
            <person name="Skelton J."/>
            <person name="Stevens K."/>
            <person name="Whitehead S."/>
            <person name="Barrell B.G."/>
        </authorList>
    </citation>
    <scope>NUCLEOTIDE SEQUENCE [LARGE SCALE GENOMIC DNA]</scope>
    <source>
        <strain>CT18</strain>
    </source>
</reference>
<reference key="2">
    <citation type="journal article" date="2003" name="J. Bacteriol.">
        <title>Comparative genomics of Salmonella enterica serovar Typhi strains Ty2 and CT18.</title>
        <authorList>
            <person name="Deng W."/>
            <person name="Liou S.-R."/>
            <person name="Plunkett G. III"/>
            <person name="Mayhew G.F."/>
            <person name="Rose D.J."/>
            <person name="Burland V."/>
            <person name="Kodoyianni V."/>
            <person name="Schwartz D.C."/>
            <person name="Blattner F.R."/>
        </authorList>
    </citation>
    <scope>NUCLEOTIDE SEQUENCE [LARGE SCALE GENOMIC DNA]</scope>
    <source>
        <strain>ATCC 700931 / Ty2</strain>
    </source>
</reference>
<proteinExistence type="inferred from homology"/>